<organism>
    <name type="scientific">Bacillus cereus (strain ATCC 14579 / DSM 31 / CCUG 7414 / JCM 2152 / NBRC 15305 / NCIMB 9373 / NCTC 2599 / NRRL B-3711)</name>
    <dbReference type="NCBI Taxonomy" id="226900"/>
    <lineage>
        <taxon>Bacteria</taxon>
        <taxon>Bacillati</taxon>
        <taxon>Bacillota</taxon>
        <taxon>Bacilli</taxon>
        <taxon>Bacillales</taxon>
        <taxon>Bacillaceae</taxon>
        <taxon>Bacillus</taxon>
        <taxon>Bacillus cereus group</taxon>
    </lineage>
</organism>
<dbReference type="EMBL" id="AE016877">
    <property type="protein sequence ID" value="AAP08155.1"/>
    <property type="molecule type" value="Genomic_DNA"/>
</dbReference>
<dbReference type="RefSeq" id="NP_830954.1">
    <property type="nucleotide sequence ID" value="NC_004722.1"/>
</dbReference>
<dbReference type="RefSeq" id="WP_000365401.1">
    <property type="nucleotide sequence ID" value="NZ_CP138336.1"/>
</dbReference>
<dbReference type="SMR" id="Q81GM5"/>
<dbReference type="STRING" id="226900.BC_1168"/>
<dbReference type="KEGG" id="bce:BC1168"/>
<dbReference type="PATRIC" id="fig|226900.8.peg.1133"/>
<dbReference type="HOGENOM" id="CLU_005070_4_0_9"/>
<dbReference type="OrthoDB" id="9803641at2"/>
<dbReference type="Proteomes" id="UP000001417">
    <property type="component" value="Chromosome"/>
</dbReference>
<dbReference type="GO" id="GO:0005737">
    <property type="term" value="C:cytoplasm"/>
    <property type="evidence" value="ECO:0000318"/>
    <property type="project" value="GO_Central"/>
</dbReference>
<dbReference type="GO" id="GO:0005524">
    <property type="term" value="F:ATP binding"/>
    <property type="evidence" value="ECO:0007669"/>
    <property type="project" value="UniProtKB-KW"/>
</dbReference>
<dbReference type="GO" id="GO:0016887">
    <property type="term" value="F:ATP hydrolysis activity"/>
    <property type="evidence" value="ECO:0000318"/>
    <property type="project" value="GO_Central"/>
</dbReference>
<dbReference type="GO" id="GO:0034605">
    <property type="term" value="P:cellular response to heat"/>
    <property type="evidence" value="ECO:0000318"/>
    <property type="project" value="GO_Central"/>
</dbReference>
<dbReference type="GO" id="GO:0042026">
    <property type="term" value="P:protein refolding"/>
    <property type="evidence" value="ECO:0007669"/>
    <property type="project" value="InterPro"/>
</dbReference>
<dbReference type="CDD" id="cd00009">
    <property type="entry name" value="AAA"/>
    <property type="match status" value="1"/>
</dbReference>
<dbReference type="CDD" id="cd19499">
    <property type="entry name" value="RecA-like_ClpB_Hsp104-like"/>
    <property type="match status" value="1"/>
</dbReference>
<dbReference type="FunFam" id="1.10.8.60:FF:000017">
    <property type="entry name" value="ATP-dependent chaperone ClpB"/>
    <property type="match status" value="1"/>
</dbReference>
<dbReference type="FunFam" id="3.40.50.300:FF:000120">
    <property type="entry name" value="ATP-dependent chaperone ClpB"/>
    <property type="match status" value="1"/>
</dbReference>
<dbReference type="FunFam" id="3.40.50.300:FF:000025">
    <property type="entry name" value="ATP-dependent Clp protease subunit"/>
    <property type="match status" value="1"/>
</dbReference>
<dbReference type="FunFam" id="3.40.50.300:FF:000010">
    <property type="entry name" value="Chaperone clpB 1, putative"/>
    <property type="match status" value="1"/>
</dbReference>
<dbReference type="FunFam" id="1.10.1780.10:FF:000008">
    <property type="entry name" value="Chaperone protein ClpB"/>
    <property type="match status" value="1"/>
</dbReference>
<dbReference type="Gene3D" id="1.10.8.60">
    <property type="match status" value="1"/>
</dbReference>
<dbReference type="Gene3D" id="1.10.1780.10">
    <property type="entry name" value="Clp, N-terminal domain"/>
    <property type="match status" value="1"/>
</dbReference>
<dbReference type="Gene3D" id="3.40.50.300">
    <property type="entry name" value="P-loop containing nucleotide triphosphate hydrolases"/>
    <property type="match status" value="3"/>
</dbReference>
<dbReference type="InterPro" id="IPR003593">
    <property type="entry name" value="AAA+_ATPase"/>
</dbReference>
<dbReference type="InterPro" id="IPR003959">
    <property type="entry name" value="ATPase_AAA_core"/>
</dbReference>
<dbReference type="InterPro" id="IPR017730">
    <property type="entry name" value="Chaperonin_ClpB"/>
</dbReference>
<dbReference type="InterPro" id="IPR019489">
    <property type="entry name" value="Clp_ATPase_C"/>
</dbReference>
<dbReference type="InterPro" id="IPR036628">
    <property type="entry name" value="Clp_N_dom_sf"/>
</dbReference>
<dbReference type="InterPro" id="IPR004176">
    <property type="entry name" value="Clp_R_dom"/>
</dbReference>
<dbReference type="InterPro" id="IPR001270">
    <property type="entry name" value="ClpA/B"/>
</dbReference>
<dbReference type="InterPro" id="IPR018368">
    <property type="entry name" value="ClpA/B_CS1"/>
</dbReference>
<dbReference type="InterPro" id="IPR028299">
    <property type="entry name" value="ClpA/B_CS2"/>
</dbReference>
<dbReference type="InterPro" id="IPR041546">
    <property type="entry name" value="ClpA/ClpB_AAA_lid"/>
</dbReference>
<dbReference type="InterPro" id="IPR050130">
    <property type="entry name" value="ClpA_ClpB"/>
</dbReference>
<dbReference type="InterPro" id="IPR027417">
    <property type="entry name" value="P-loop_NTPase"/>
</dbReference>
<dbReference type="NCBIfam" id="TIGR03346">
    <property type="entry name" value="chaperone_ClpB"/>
    <property type="match status" value="1"/>
</dbReference>
<dbReference type="PANTHER" id="PTHR11638">
    <property type="entry name" value="ATP-DEPENDENT CLP PROTEASE"/>
    <property type="match status" value="1"/>
</dbReference>
<dbReference type="PANTHER" id="PTHR11638:SF18">
    <property type="entry name" value="HEAT SHOCK PROTEIN 104"/>
    <property type="match status" value="1"/>
</dbReference>
<dbReference type="Pfam" id="PF00004">
    <property type="entry name" value="AAA"/>
    <property type="match status" value="1"/>
</dbReference>
<dbReference type="Pfam" id="PF07724">
    <property type="entry name" value="AAA_2"/>
    <property type="match status" value="1"/>
</dbReference>
<dbReference type="Pfam" id="PF17871">
    <property type="entry name" value="AAA_lid_9"/>
    <property type="match status" value="1"/>
</dbReference>
<dbReference type="Pfam" id="PF02861">
    <property type="entry name" value="Clp_N"/>
    <property type="match status" value="2"/>
</dbReference>
<dbReference type="Pfam" id="PF10431">
    <property type="entry name" value="ClpB_D2-small"/>
    <property type="match status" value="1"/>
</dbReference>
<dbReference type="PRINTS" id="PR00300">
    <property type="entry name" value="CLPPROTEASEA"/>
</dbReference>
<dbReference type="SMART" id="SM00382">
    <property type="entry name" value="AAA"/>
    <property type="match status" value="2"/>
</dbReference>
<dbReference type="SMART" id="SM01086">
    <property type="entry name" value="ClpB_D2-small"/>
    <property type="match status" value="1"/>
</dbReference>
<dbReference type="SUPFAM" id="SSF81923">
    <property type="entry name" value="Double Clp-N motif"/>
    <property type="match status" value="1"/>
</dbReference>
<dbReference type="SUPFAM" id="SSF52540">
    <property type="entry name" value="P-loop containing nucleoside triphosphate hydrolases"/>
    <property type="match status" value="2"/>
</dbReference>
<dbReference type="PROSITE" id="PS51903">
    <property type="entry name" value="CLP_R"/>
    <property type="match status" value="1"/>
</dbReference>
<dbReference type="PROSITE" id="PS00870">
    <property type="entry name" value="CLPAB_1"/>
    <property type="match status" value="1"/>
</dbReference>
<dbReference type="PROSITE" id="PS00871">
    <property type="entry name" value="CLPAB_2"/>
    <property type="match status" value="1"/>
</dbReference>
<comment type="function">
    <text evidence="1">Part of a stress-induced multi-chaperone system, it is involved in the recovery of the cell from heat-induced damage, in cooperation with DnaK, DnaJ and GrpE. Acts before DnaK, in the processing of protein aggregates. Protein binding stimulates the ATPase activity; ATP hydrolysis unfolds the denatured protein aggregates, which probably helps expose new hydrophobic binding sites on the surface of ClpB-bound aggregates, contributing to the solubilization and refolding of denatured protein aggregates by DnaK (By similarity).</text>
</comment>
<comment type="subunit">
    <text evidence="1">Homohexamer. The oligomerization is ATP-dependent (By similarity).</text>
</comment>
<comment type="subcellular location">
    <subcellularLocation>
        <location evidence="3">Cytoplasm</location>
    </subcellularLocation>
</comment>
<comment type="domain">
    <text evidence="1">The Clp repeat (R) domain probably functions as a substrate-discriminating domain, recruiting aggregated proteins to the ClpB hexamer and/or stabilizing bound proteins. The NBD2 domain is responsible for oligomerization, whereas the NBD1 domain stabilizes the hexamer probably in an ATP-dependent manner. The movement of the coiled-coil domain is essential for ClpB ability to rescue proteins from an aggregated state, probably by pulling apart large aggregated proteins, which are bound between the coiled-coils motifs of adjacent ClpB subunits in the functional hexamer (By similarity).</text>
</comment>
<comment type="similarity">
    <text evidence="3">Belongs to the ClpA/ClpB family.</text>
</comment>
<proteinExistence type="inferred from homology"/>
<feature type="chain" id="PRO_0000191090" description="Chaperone protein ClpB">
    <location>
        <begin position="1"/>
        <end position="866"/>
    </location>
</feature>
<feature type="domain" description="Clp R" evidence="2">
    <location>
        <begin position="3"/>
        <end position="149"/>
    </location>
</feature>
<feature type="region of interest" description="Repeat 1" evidence="2">
    <location>
        <begin position="6"/>
        <end position="71"/>
    </location>
</feature>
<feature type="region of interest" description="Repeat 2" evidence="2">
    <location>
        <begin position="86"/>
        <end position="149"/>
    </location>
</feature>
<feature type="region of interest" description="NBD1" evidence="1">
    <location>
        <begin position="162"/>
        <end position="343"/>
    </location>
</feature>
<feature type="region of interest" description="Linker" evidence="1">
    <location>
        <begin position="344"/>
        <end position="551"/>
    </location>
</feature>
<feature type="region of interest" description="NBD2" evidence="1">
    <location>
        <begin position="561"/>
        <end position="773"/>
    </location>
</feature>
<feature type="region of interest" description="C-terminal" evidence="1">
    <location>
        <begin position="774"/>
        <end position="866"/>
    </location>
</feature>
<feature type="coiled-coil region" evidence="1">
    <location>
        <begin position="394"/>
        <end position="528"/>
    </location>
</feature>
<feature type="binding site" evidence="1">
    <location>
        <begin position="209"/>
        <end position="216"/>
    </location>
    <ligand>
        <name>ATP</name>
        <dbReference type="ChEBI" id="CHEBI:30616"/>
        <label>1</label>
    </ligand>
</feature>
<feature type="binding site" evidence="1">
    <location>
        <begin position="611"/>
        <end position="618"/>
    </location>
    <ligand>
        <name>ATP</name>
        <dbReference type="ChEBI" id="CHEBI:30616"/>
        <label>2</label>
    </ligand>
</feature>
<keyword id="KW-0067">ATP-binding</keyword>
<keyword id="KW-0143">Chaperone</keyword>
<keyword id="KW-0175">Coiled coil</keyword>
<keyword id="KW-0963">Cytoplasm</keyword>
<keyword id="KW-0547">Nucleotide-binding</keyword>
<keyword id="KW-1185">Reference proteome</keyword>
<keyword id="KW-0677">Repeat</keyword>
<keyword id="KW-0346">Stress response</keyword>
<reference key="1">
    <citation type="journal article" date="2003" name="Nature">
        <title>Genome sequence of Bacillus cereus and comparative analysis with Bacillus anthracis.</title>
        <authorList>
            <person name="Ivanova N."/>
            <person name="Sorokin A."/>
            <person name="Anderson I."/>
            <person name="Galleron N."/>
            <person name="Candelon B."/>
            <person name="Kapatral V."/>
            <person name="Bhattacharyya A."/>
            <person name="Reznik G."/>
            <person name="Mikhailova N."/>
            <person name="Lapidus A."/>
            <person name="Chu L."/>
            <person name="Mazur M."/>
            <person name="Goltsman E."/>
            <person name="Larsen N."/>
            <person name="D'Souza M."/>
            <person name="Walunas T."/>
            <person name="Grechkin Y."/>
            <person name="Pusch G."/>
            <person name="Haselkorn R."/>
            <person name="Fonstein M."/>
            <person name="Ehrlich S.D."/>
            <person name="Overbeek R."/>
            <person name="Kyrpides N.C."/>
        </authorList>
    </citation>
    <scope>NUCLEOTIDE SEQUENCE [LARGE SCALE GENOMIC DNA]</scope>
    <source>
        <strain>ATCC 14579 / DSM 31 / CCUG 7414 / JCM 2152 / NBRC 15305 / NCIMB 9373 / NCTC 2599 / NRRL B-3711</strain>
    </source>
</reference>
<evidence type="ECO:0000250" key="1"/>
<evidence type="ECO:0000255" key="2">
    <source>
        <dbReference type="PROSITE-ProRule" id="PRU01251"/>
    </source>
</evidence>
<evidence type="ECO:0000305" key="3"/>
<sequence>MDLNQMTTKTQEAIMSAQSLAVSHHHQEVDTVHLLLALLEEQDGLAVRIFQKMNVDIEALKQGAESLIKKKPSVTGSGAEVGKLYVTSALQQLLVRAGKEAEKLQDDYISVEHVLLAFSEEKGDINQLFTRLHITKDNLLQSLMTVRGNQRVTSQNPEATYEALEKYGRDLVAEVRAGKIDPVIGRDSEIRRVIRILSRKTKNNPVLIGEPGVGKTAIVEGLAQRIVKKDVPEGLKDRTIFALDMSALVAGAKFRGEFEERLQAVLNEIKKSEGRILLFIDELHTIVGAGKTEGAMDAGNMLKPMLARGELHCIGATTLDEYRKYIEKDPALERRFQQVLAEEPTVEDTISILRGLKERFEIYHGVNIHDRAIVAASVLSDRYISDRFLPDKAIDLVDEACATIRTEIDSMPTELDEVTRRIMQLEIEEAALGKETDRGSQERLKTLQRELSDLKEVASGMRAKWEKEKEDIHKVRDLREHLERLRRELEEAEGNYDLNKAAELRHGKIPAIEKELKEAEEMGAHNKQENRLLREEVSEEEIADIVSRWTGIPVAKLVEGEREKLLRLEQILSERVIGQEEAVSLVSDAVLRARAGIKDPNRPIGSFIFLGPTGVGKTELAKTLAQSLFDSEEQMIRIDMSEYMEKHAVSRLIGAPPGYVGYEEGGQLTEAVRRKPYSVVLLDEIEKAHPEVFNILLQMLDDGRITDSQGRTVDFKNTVIIMTSNIGSAHLLDGLEEDGSIKEESRDLVMGQLRGHFRPEFLNRVDEIILFKPLTTNEIKGIVDKIVKELQGRLADRHITVELTDAAKEFVVEAGFDPMYGARPLKRYVQRQVETKLARELIAGTITDNSHVVVDVENNELVVHVK</sequence>
<name>CLPB_BACCR</name>
<accession>Q81GM5</accession>
<gene>
    <name type="primary">clpB</name>
    <name type="ordered locus">BC_1168</name>
</gene>
<protein>
    <recommendedName>
        <fullName>Chaperone protein ClpB</fullName>
    </recommendedName>
</protein>